<evidence type="ECO:0000255" key="1">
    <source>
        <dbReference type="HAMAP-Rule" id="MF_01631"/>
    </source>
</evidence>
<reference key="1">
    <citation type="submission" date="2007-10" db="EMBL/GenBank/DDBJ databases">
        <title>Brucella canis ATCC 23365 whole genome shotgun sequencing project.</title>
        <authorList>
            <person name="Setubal J.C."/>
            <person name="Bowns C."/>
            <person name="Boyle S."/>
            <person name="Crasta O.R."/>
            <person name="Czar M.J."/>
            <person name="Dharmanolla C."/>
            <person name="Gillespie J.J."/>
            <person name="Kenyon R.W."/>
            <person name="Lu J."/>
            <person name="Mane S."/>
            <person name="Mohapatra S."/>
            <person name="Nagrani S."/>
            <person name="Purkayastha A."/>
            <person name="Rajasimha H.K."/>
            <person name="Shallom J.M."/>
            <person name="Shallom S."/>
            <person name="Shukla M."/>
            <person name="Snyder E.E."/>
            <person name="Sobral B.W."/>
            <person name="Wattam A.R."/>
            <person name="Will R."/>
            <person name="Williams K."/>
            <person name="Yoo H."/>
            <person name="Bruce D."/>
            <person name="Detter C."/>
            <person name="Munk C."/>
            <person name="Brettin T.S."/>
        </authorList>
    </citation>
    <scope>NUCLEOTIDE SEQUENCE [LARGE SCALE GENOMIC DNA]</scope>
    <source>
        <strain>ATCC 23365 / NCTC 10854 / RM-666</strain>
    </source>
</reference>
<feature type="chain" id="PRO_1000088124" description="Bifunctional protein GlmU">
    <location>
        <begin position="1"/>
        <end position="454"/>
    </location>
</feature>
<feature type="region of interest" description="Pyrophosphorylase" evidence="1">
    <location>
        <begin position="1"/>
        <end position="232"/>
    </location>
</feature>
<feature type="region of interest" description="Linker" evidence="1">
    <location>
        <begin position="233"/>
        <end position="253"/>
    </location>
</feature>
<feature type="region of interest" description="N-acetyltransferase" evidence="1">
    <location>
        <begin position="254"/>
        <end position="454"/>
    </location>
</feature>
<feature type="active site" description="Proton acceptor" evidence="1">
    <location>
        <position position="349"/>
    </location>
</feature>
<feature type="binding site" evidence="1">
    <location>
        <begin position="11"/>
        <end position="14"/>
    </location>
    <ligand>
        <name>UDP-N-acetyl-alpha-D-glucosamine</name>
        <dbReference type="ChEBI" id="CHEBI:57705"/>
    </ligand>
</feature>
<feature type="binding site" evidence="1">
    <location>
        <position position="25"/>
    </location>
    <ligand>
        <name>UDP-N-acetyl-alpha-D-glucosamine</name>
        <dbReference type="ChEBI" id="CHEBI:57705"/>
    </ligand>
</feature>
<feature type="binding site" evidence="1">
    <location>
        <position position="78"/>
    </location>
    <ligand>
        <name>UDP-N-acetyl-alpha-D-glucosamine</name>
        <dbReference type="ChEBI" id="CHEBI:57705"/>
    </ligand>
</feature>
<feature type="binding site" evidence="1">
    <location>
        <begin position="83"/>
        <end position="84"/>
    </location>
    <ligand>
        <name>UDP-N-acetyl-alpha-D-glucosamine</name>
        <dbReference type="ChEBI" id="CHEBI:57705"/>
    </ligand>
</feature>
<feature type="binding site" evidence="1">
    <location>
        <position position="108"/>
    </location>
    <ligand>
        <name>Mg(2+)</name>
        <dbReference type="ChEBI" id="CHEBI:18420"/>
    </ligand>
</feature>
<feature type="binding site" evidence="1">
    <location>
        <position position="144"/>
    </location>
    <ligand>
        <name>UDP-N-acetyl-alpha-D-glucosamine</name>
        <dbReference type="ChEBI" id="CHEBI:57705"/>
    </ligand>
</feature>
<feature type="binding site" evidence="1">
    <location>
        <position position="158"/>
    </location>
    <ligand>
        <name>UDP-N-acetyl-alpha-D-glucosamine</name>
        <dbReference type="ChEBI" id="CHEBI:57705"/>
    </ligand>
</feature>
<feature type="binding site" evidence="1">
    <location>
        <position position="173"/>
    </location>
    <ligand>
        <name>UDP-N-acetyl-alpha-D-glucosamine</name>
        <dbReference type="ChEBI" id="CHEBI:57705"/>
    </ligand>
</feature>
<feature type="binding site" evidence="1">
    <location>
        <position position="230"/>
    </location>
    <ligand>
        <name>Mg(2+)</name>
        <dbReference type="ChEBI" id="CHEBI:18420"/>
    </ligand>
</feature>
<feature type="binding site" evidence="1">
    <location>
        <position position="230"/>
    </location>
    <ligand>
        <name>UDP-N-acetyl-alpha-D-glucosamine</name>
        <dbReference type="ChEBI" id="CHEBI:57705"/>
    </ligand>
</feature>
<feature type="binding site" evidence="1">
    <location>
        <position position="319"/>
    </location>
    <ligand>
        <name>UDP-N-acetyl-alpha-D-glucosamine</name>
        <dbReference type="ChEBI" id="CHEBI:57705"/>
    </ligand>
</feature>
<feature type="binding site" evidence="1">
    <location>
        <position position="337"/>
    </location>
    <ligand>
        <name>UDP-N-acetyl-alpha-D-glucosamine</name>
        <dbReference type="ChEBI" id="CHEBI:57705"/>
    </ligand>
</feature>
<feature type="binding site" evidence="1">
    <location>
        <position position="352"/>
    </location>
    <ligand>
        <name>UDP-N-acetyl-alpha-D-glucosamine</name>
        <dbReference type="ChEBI" id="CHEBI:57705"/>
    </ligand>
</feature>
<feature type="binding site" evidence="1">
    <location>
        <position position="363"/>
    </location>
    <ligand>
        <name>UDP-N-acetyl-alpha-D-glucosamine</name>
        <dbReference type="ChEBI" id="CHEBI:57705"/>
    </ligand>
</feature>
<feature type="binding site" evidence="1">
    <location>
        <position position="366"/>
    </location>
    <ligand>
        <name>acetyl-CoA</name>
        <dbReference type="ChEBI" id="CHEBI:57288"/>
    </ligand>
</feature>
<feature type="binding site" evidence="1">
    <location>
        <begin position="372"/>
        <end position="373"/>
    </location>
    <ligand>
        <name>acetyl-CoA</name>
        <dbReference type="ChEBI" id="CHEBI:57288"/>
    </ligand>
</feature>
<feature type="binding site" evidence="1">
    <location>
        <position position="391"/>
    </location>
    <ligand>
        <name>acetyl-CoA</name>
        <dbReference type="ChEBI" id="CHEBI:57288"/>
    </ligand>
</feature>
<feature type="binding site" evidence="1">
    <location>
        <position position="409"/>
    </location>
    <ligand>
        <name>acetyl-CoA</name>
        <dbReference type="ChEBI" id="CHEBI:57288"/>
    </ligand>
</feature>
<feature type="binding site" evidence="1">
    <location>
        <position position="426"/>
    </location>
    <ligand>
        <name>acetyl-CoA</name>
        <dbReference type="ChEBI" id="CHEBI:57288"/>
    </ligand>
</feature>
<keyword id="KW-0012">Acyltransferase</keyword>
<keyword id="KW-0133">Cell shape</keyword>
<keyword id="KW-0961">Cell wall biogenesis/degradation</keyword>
<keyword id="KW-0963">Cytoplasm</keyword>
<keyword id="KW-0460">Magnesium</keyword>
<keyword id="KW-0479">Metal-binding</keyword>
<keyword id="KW-0511">Multifunctional enzyme</keyword>
<keyword id="KW-0548">Nucleotidyltransferase</keyword>
<keyword id="KW-0573">Peptidoglycan synthesis</keyword>
<keyword id="KW-1185">Reference proteome</keyword>
<keyword id="KW-0677">Repeat</keyword>
<keyword id="KW-0808">Transferase</keyword>
<protein>
    <recommendedName>
        <fullName evidence="1">Bifunctional protein GlmU</fullName>
    </recommendedName>
    <domain>
        <recommendedName>
            <fullName evidence="1">UDP-N-acetylglucosamine pyrophosphorylase</fullName>
            <ecNumber evidence="1">2.7.7.23</ecNumber>
        </recommendedName>
        <alternativeName>
            <fullName evidence="1">N-acetylglucosamine-1-phosphate uridyltransferase</fullName>
        </alternativeName>
    </domain>
    <domain>
        <recommendedName>
            <fullName evidence="1">Glucosamine-1-phosphate N-acetyltransferase</fullName>
            <ecNumber evidence="1">2.3.1.157</ecNumber>
        </recommendedName>
    </domain>
</protein>
<name>GLMU_BRUC2</name>
<accession>A9MBM3</accession>
<comment type="function">
    <text evidence="1">Catalyzes the last two sequential reactions in the de novo biosynthetic pathway for UDP-N-acetylglucosamine (UDP-GlcNAc). The C-terminal domain catalyzes the transfer of acetyl group from acetyl coenzyme A to glucosamine-1-phosphate (GlcN-1-P) to produce N-acetylglucosamine-1-phosphate (GlcNAc-1-P), which is converted into UDP-GlcNAc by the transfer of uridine 5-monophosphate (from uridine 5-triphosphate), a reaction catalyzed by the N-terminal domain.</text>
</comment>
<comment type="catalytic activity">
    <reaction evidence="1">
        <text>alpha-D-glucosamine 1-phosphate + acetyl-CoA = N-acetyl-alpha-D-glucosamine 1-phosphate + CoA + H(+)</text>
        <dbReference type="Rhea" id="RHEA:13725"/>
        <dbReference type="ChEBI" id="CHEBI:15378"/>
        <dbReference type="ChEBI" id="CHEBI:57287"/>
        <dbReference type="ChEBI" id="CHEBI:57288"/>
        <dbReference type="ChEBI" id="CHEBI:57776"/>
        <dbReference type="ChEBI" id="CHEBI:58516"/>
        <dbReference type="EC" id="2.3.1.157"/>
    </reaction>
</comment>
<comment type="catalytic activity">
    <reaction evidence="1">
        <text>N-acetyl-alpha-D-glucosamine 1-phosphate + UTP + H(+) = UDP-N-acetyl-alpha-D-glucosamine + diphosphate</text>
        <dbReference type="Rhea" id="RHEA:13509"/>
        <dbReference type="ChEBI" id="CHEBI:15378"/>
        <dbReference type="ChEBI" id="CHEBI:33019"/>
        <dbReference type="ChEBI" id="CHEBI:46398"/>
        <dbReference type="ChEBI" id="CHEBI:57705"/>
        <dbReference type="ChEBI" id="CHEBI:57776"/>
        <dbReference type="EC" id="2.7.7.23"/>
    </reaction>
</comment>
<comment type="cofactor">
    <cofactor evidence="1">
        <name>Mg(2+)</name>
        <dbReference type="ChEBI" id="CHEBI:18420"/>
    </cofactor>
    <text evidence="1">Binds 1 Mg(2+) ion per subunit.</text>
</comment>
<comment type="pathway">
    <text evidence="1">Nucleotide-sugar biosynthesis; UDP-N-acetyl-alpha-D-glucosamine biosynthesis; N-acetyl-alpha-D-glucosamine 1-phosphate from alpha-D-glucosamine 6-phosphate (route II): step 2/2.</text>
</comment>
<comment type="pathway">
    <text evidence="1">Nucleotide-sugar biosynthesis; UDP-N-acetyl-alpha-D-glucosamine biosynthesis; UDP-N-acetyl-alpha-D-glucosamine from N-acetyl-alpha-D-glucosamine 1-phosphate: step 1/1.</text>
</comment>
<comment type="pathway">
    <text evidence="1">Bacterial outer membrane biogenesis; LPS lipid A biosynthesis.</text>
</comment>
<comment type="subunit">
    <text evidence="1">Homotrimer.</text>
</comment>
<comment type="subcellular location">
    <subcellularLocation>
        <location evidence="1">Cytoplasm</location>
    </subcellularLocation>
</comment>
<comment type="similarity">
    <text evidence="1">In the N-terminal section; belongs to the N-acetylglucosamine-1-phosphate uridyltransferase family.</text>
</comment>
<comment type="similarity">
    <text evidence="1">In the C-terminal section; belongs to the transferase hexapeptide repeat family.</text>
</comment>
<sequence length="454" mass="47935">MTDRTCLSIVLAAGEGTRMKSNLPKVLHRVAGLPLVCHVVNAVRGTGKSDVALVVGRGAEDVRSAVEKIAGPVSAFEQKERLGTAHAVLAAREAIARGYDDLLIVFGDTPLIEAQSLLAARERLAQGADLVVIGFRPASPHGYGRLIEEGGQLVAIIEEKEATDEQKKIGFCNGGLMALRGQHALALLDAVGNDNAKGEYYLTDIVAIAHGKGLNVTAIEVPVDNVIGINNRAELAEAETIWQNRKRRELMLSGVTLIAPETVFFSYDTVIEPDVVIEPNVFFGPSVHVASGALIHSFSHLEGAQVGEKAEIGPFARLRPGADLAEKSKVGNFCEVKNAKVGKGAKINHLTYIGDAVIGASSNIGAGTITCNYDGYNKFKTIIGDNAFIGSNSSLVAPVEIGDNAYIASGSVITADVPADALALGRARQETKEGRAKILREKYAAIKAAKSVSK</sequence>
<dbReference type="EC" id="2.7.7.23" evidence="1"/>
<dbReference type="EC" id="2.3.1.157" evidence="1"/>
<dbReference type="EMBL" id="CP000873">
    <property type="protein sequence ID" value="ABX63760.1"/>
    <property type="molecule type" value="Genomic_DNA"/>
</dbReference>
<dbReference type="RefSeq" id="WP_004689006.1">
    <property type="nucleotide sequence ID" value="NC_010104.1"/>
</dbReference>
<dbReference type="SMR" id="A9MBM3"/>
<dbReference type="GeneID" id="97535293"/>
<dbReference type="KEGG" id="bcs:BCAN_B0583"/>
<dbReference type="HOGENOM" id="CLU_029499_15_2_5"/>
<dbReference type="PhylomeDB" id="A9MBM3"/>
<dbReference type="UniPathway" id="UPA00113">
    <property type="reaction ID" value="UER00532"/>
</dbReference>
<dbReference type="UniPathway" id="UPA00113">
    <property type="reaction ID" value="UER00533"/>
</dbReference>
<dbReference type="UniPathway" id="UPA00973"/>
<dbReference type="Proteomes" id="UP000001385">
    <property type="component" value="Chromosome II"/>
</dbReference>
<dbReference type="GO" id="GO:0005737">
    <property type="term" value="C:cytoplasm"/>
    <property type="evidence" value="ECO:0007669"/>
    <property type="project" value="UniProtKB-SubCell"/>
</dbReference>
<dbReference type="GO" id="GO:0016020">
    <property type="term" value="C:membrane"/>
    <property type="evidence" value="ECO:0007669"/>
    <property type="project" value="GOC"/>
</dbReference>
<dbReference type="GO" id="GO:0019134">
    <property type="term" value="F:glucosamine-1-phosphate N-acetyltransferase activity"/>
    <property type="evidence" value="ECO:0007669"/>
    <property type="project" value="UniProtKB-UniRule"/>
</dbReference>
<dbReference type="GO" id="GO:0000287">
    <property type="term" value="F:magnesium ion binding"/>
    <property type="evidence" value="ECO:0007669"/>
    <property type="project" value="UniProtKB-UniRule"/>
</dbReference>
<dbReference type="GO" id="GO:0003977">
    <property type="term" value="F:UDP-N-acetylglucosamine diphosphorylase activity"/>
    <property type="evidence" value="ECO:0007669"/>
    <property type="project" value="UniProtKB-UniRule"/>
</dbReference>
<dbReference type="GO" id="GO:0000902">
    <property type="term" value="P:cell morphogenesis"/>
    <property type="evidence" value="ECO:0007669"/>
    <property type="project" value="UniProtKB-UniRule"/>
</dbReference>
<dbReference type="GO" id="GO:0071555">
    <property type="term" value="P:cell wall organization"/>
    <property type="evidence" value="ECO:0007669"/>
    <property type="project" value="UniProtKB-KW"/>
</dbReference>
<dbReference type="GO" id="GO:0009245">
    <property type="term" value="P:lipid A biosynthetic process"/>
    <property type="evidence" value="ECO:0007669"/>
    <property type="project" value="UniProtKB-UniRule"/>
</dbReference>
<dbReference type="GO" id="GO:0009252">
    <property type="term" value="P:peptidoglycan biosynthetic process"/>
    <property type="evidence" value="ECO:0007669"/>
    <property type="project" value="UniProtKB-UniRule"/>
</dbReference>
<dbReference type="GO" id="GO:0008360">
    <property type="term" value="P:regulation of cell shape"/>
    <property type="evidence" value="ECO:0007669"/>
    <property type="project" value="UniProtKB-KW"/>
</dbReference>
<dbReference type="GO" id="GO:0006048">
    <property type="term" value="P:UDP-N-acetylglucosamine biosynthetic process"/>
    <property type="evidence" value="ECO:0007669"/>
    <property type="project" value="UniProtKB-UniPathway"/>
</dbReference>
<dbReference type="CDD" id="cd02540">
    <property type="entry name" value="GT2_GlmU_N_bac"/>
    <property type="match status" value="1"/>
</dbReference>
<dbReference type="CDD" id="cd03353">
    <property type="entry name" value="LbH_GlmU_C"/>
    <property type="match status" value="1"/>
</dbReference>
<dbReference type="Gene3D" id="2.160.10.10">
    <property type="entry name" value="Hexapeptide repeat proteins"/>
    <property type="match status" value="1"/>
</dbReference>
<dbReference type="Gene3D" id="3.90.550.10">
    <property type="entry name" value="Spore Coat Polysaccharide Biosynthesis Protein SpsA, Chain A"/>
    <property type="match status" value="1"/>
</dbReference>
<dbReference type="HAMAP" id="MF_01631">
    <property type="entry name" value="GlmU"/>
    <property type="match status" value="1"/>
</dbReference>
<dbReference type="InterPro" id="IPR005882">
    <property type="entry name" value="Bifunctional_GlmU"/>
</dbReference>
<dbReference type="InterPro" id="IPR050065">
    <property type="entry name" value="GlmU-like"/>
</dbReference>
<dbReference type="InterPro" id="IPR038009">
    <property type="entry name" value="GlmU_C_LbH"/>
</dbReference>
<dbReference type="InterPro" id="IPR001451">
    <property type="entry name" value="Hexapep"/>
</dbReference>
<dbReference type="InterPro" id="IPR018357">
    <property type="entry name" value="Hexapep_transf_CS"/>
</dbReference>
<dbReference type="InterPro" id="IPR025877">
    <property type="entry name" value="MobA-like_NTP_Trfase"/>
</dbReference>
<dbReference type="InterPro" id="IPR029044">
    <property type="entry name" value="Nucleotide-diphossugar_trans"/>
</dbReference>
<dbReference type="InterPro" id="IPR011004">
    <property type="entry name" value="Trimer_LpxA-like_sf"/>
</dbReference>
<dbReference type="NCBIfam" id="TIGR01173">
    <property type="entry name" value="glmU"/>
    <property type="match status" value="1"/>
</dbReference>
<dbReference type="NCBIfam" id="NF010933">
    <property type="entry name" value="PRK14353.1"/>
    <property type="match status" value="1"/>
</dbReference>
<dbReference type="PANTHER" id="PTHR43584:SF3">
    <property type="entry name" value="BIFUNCTIONAL PROTEIN GLMU"/>
    <property type="match status" value="1"/>
</dbReference>
<dbReference type="PANTHER" id="PTHR43584">
    <property type="entry name" value="NUCLEOTIDYL TRANSFERASE"/>
    <property type="match status" value="1"/>
</dbReference>
<dbReference type="Pfam" id="PF00132">
    <property type="entry name" value="Hexapep"/>
    <property type="match status" value="1"/>
</dbReference>
<dbReference type="Pfam" id="PF12804">
    <property type="entry name" value="NTP_transf_3"/>
    <property type="match status" value="1"/>
</dbReference>
<dbReference type="SUPFAM" id="SSF53448">
    <property type="entry name" value="Nucleotide-diphospho-sugar transferases"/>
    <property type="match status" value="1"/>
</dbReference>
<dbReference type="SUPFAM" id="SSF51161">
    <property type="entry name" value="Trimeric LpxA-like enzymes"/>
    <property type="match status" value="1"/>
</dbReference>
<dbReference type="PROSITE" id="PS00101">
    <property type="entry name" value="HEXAPEP_TRANSFERASES"/>
    <property type="match status" value="1"/>
</dbReference>
<proteinExistence type="inferred from homology"/>
<organism>
    <name type="scientific">Brucella canis (strain ATCC 23365 / NCTC 10854 / RM-666)</name>
    <dbReference type="NCBI Taxonomy" id="483179"/>
    <lineage>
        <taxon>Bacteria</taxon>
        <taxon>Pseudomonadati</taxon>
        <taxon>Pseudomonadota</taxon>
        <taxon>Alphaproteobacteria</taxon>
        <taxon>Hyphomicrobiales</taxon>
        <taxon>Brucellaceae</taxon>
        <taxon>Brucella/Ochrobactrum group</taxon>
        <taxon>Brucella</taxon>
    </lineage>
</organism>
<gene>
    <name evidence="1" type="primary">glmU</name>
    <name type="ordered locus">BCAN_B0583</name>
</gene>